<dbReference type="EC" id="2.5.1.7" evidence="1"/>
<dbReference type="EMBL" id="AL646052">
    <property type="protein sequence ID" value="CAD16660.1"/>
    <property type="molecule type" value="Genomic_DNA"/>
</dbReference>
<dbReference type="RefSeq" id="WP_011002858.1">
    <property type="nucleotide sequence ID" value="NC_003295.1"/>
</dbReference>
<dbReference type="SMR" id="Q8XV78"/>
<dbReference type="STRING" id="267608.RSc2953"/>
<dbReference type="EnsemblBacteria" id="CAD16660">
    <property type="protein sequence ID" value="CAD16660"/>
    <property type="gene ID" value="RSc2953"/>
</dbReference>
<dbReference type="KEGG" id="rso:RSc2953"/>
<dbReference type="PATRIC" id="fig|267608.8.peg.3011"/>
<dbReference type="eggNOG" id="COG0766">
    <property type="taxonomic scope" value="Bacteria"/>
</dbReference>
<dbReference type="HOGENOM" id="CLU_027387_0_0_4"/>
<dbReference type="UniPathway" id="UPA00219"/>
<dbReference type="Proteomes" id="UP000001436">
    <property type="component" value="Chromosome"/>
</dbReference>
<dbReference type="GO" id="GO:0005737">
    <property type="term" value="C:cytoplasm"/>
    <property type="evidence" value="ECO:0007669"/>
    <property type="project" value="UniProtKB-SubCell"/>
</dbReference>
<dbReference type="GO" id="GO:0008760">
    <property type="term" value="F:UDP-N-acetylglucosamine 1-carboxyvinyltransferase activity"/>
    <property type="evidence" value="ECO:0007669"/>
    <property type="project" value="UniProtKB-UniRule"/>
</dbReference>
<dbReference type="GO" id="GO:0051301">
    <property type="term" value="P:cell division"/>
    <property type="evidence" value="ECO:0007669"/>
    <property type="project" value="UniProtKB-KW"/>
</dbReference>
<dbReference type="GO" id="GO:0071555">
    <property type="term" value="P:cell wall organization"/>
    <property type="evidence" value="ECO:0007669"/>
    <property type="project" value="UniProtKB-KW"/>
</dbReference>
<dbReference type="GO" id="GO:0009252">
    <property type="term" value="P:peptidoglycan biosynthetic process"/>
    <property type="evidence" value="ECO:0007669"/>
    <property type="project" value="UniProtKB-UniRule"/>
</dbReference>
<dbReference type="GO" id="GO:0008360">
    <property type="term" value="P:regulation of cell shape"/>
    <property type="evidence" value="ECO:0007669"/>
    <property type="project" value="UniProtKB-KW"/>
</dbReference>
<dbReference type="GO" id="GO:0019277">
    <property type="term" value="P:UDP-N-acetylgalactosamine biosynthetic process"/>
    <property type="evidence" value="ECO:0007669"/>
    <property type="project" value="InterPro"/>
</dbReference>
<dbReference type="CDD" id="cd01555">
    <property type="entry name" value="UdpNAET"/>
    <property type="match status" value="1"/>
</dbReference>
<dbReference type="FunFam" id="3.65.10.10:FF:000001">
    <property type="entry name" value="UDP-N-acetylglucosamine 1-carboxyvinyltransferase"/>
    <property type="match status" value="1"/>
</dbReference>
<dbReference type="Gene3D" id="3.65.10.10">
    <property type="entry name" value="Enolpyruvate transferase domain"/>
    <property type="match status" value="2"/>
</dbReference>
<dbReference type="HAMAP" id="MF_00111">
    <property type="entry name" value="MurA"/>
    <property type="match status" value="1"/>
</dbReference>
<dbReference type="InterPro" id="IPR001986">
    <property type="entry name" value="Enolpyruvate_Tfrase_dom"/>
</dbReference>
<dbReference type="InterPro" id="IPR036968">
    <property type="entry name" value="Enolpyruvate_Tfrase_sf"/>
</dbReference>
<dbReference type="InterPro" id="IPR050068">
    <property type="entry name" value="MurA_subfamily"/>
</dbReference>
<dbReference type="InterPro" id="IPR013792">
    <property type="entry name" value="RNA3'P_cycl/enolpyr_Trfase_a/b"/>
</dbReference>
<dbReference type="InterPro" id="IPR005750">
    <property type="entry name" value="UDP_GlcNAc_COvinyl_MurA"/>
</dbReference>
<dbReference type="NCBIfam" id="TIGR01072">
    <property type="entry name" value="murA"/>
    <property type="match status" value="1"/>
</dbReference>
<dbReference type="NCBIfam" id="NF006873">
    <property type="entry name" value="PRK09369.1"/>
    <property type="match status" value="1"/>
</dbReference>
<dbReference type="PANTHER" id="PTHR43783">
    <property type="entry name" value="UDP-N-ACETYLGLUCOSAMINE 1-CARBOXYVINYLTRANSFERASE"/>
    <property type="match status" value="1"/>
</dbReference>
<dbReference type="PANTHER" id="PTHR43783:SF1">
    <property type="entry name" value="UDP-N-ACETYLGLUCOSAMINE 1-CARBOXYVINYLTRANSFERASE"/>
    <property type="match status" value="1"/>
</dbReference>
<dbReference type="Pfam" id="PF00275">
    <property type="entry name" value="EPSP_synthase"/>
    <property type="match status" value="1"/>
</dbReference>
<dbReference type="SUPFAM" id="SSF55205">
    <property type="entry name" value="EPT/RTPC-like"/>
    <property type="match status" value="1"/>
</dbReference>
<gene>
    <name evidence="1" type="primary">murA</name>
    <name type="ordered locus">RSc2953</name>
    <name type="ORF">RS04753</name>
</gene>
<name>MURA_RALN1</name>
<evidence type="ECO:0000255" key="1">
    <source>
        <dbReference type="HAMAP-Rule" id="MF_00111"/>
    </source>
</evidence>
<feature type="chain" id="PRO_0000178905" description="UDP-N-acetylglucosamine 1-carboxyvinyltransferase">
    <location>
        <begin position="1"/>
        <end position="421"/>
    </location>
</feature>
<feature type="active site" description="Proton donor" evidence="1">
    <location>
        <position position="116"/>
    </location>
</feature>
<feature type="binding site" evidence="1">
    <location>
        <begin position="22"/>
        <end position="23"/>
    </location>
    <ligand>
        <name>phosphoenolpyruvate</name>
        <dbReference type="ChEBI" id="CHEBI:58702"/>
    </ligand>
</feature>
<feature type="binding site" evidence="1">
    <location>
        <position position="92"/>
    </location>
    <ligand>
        <name>UDP-N-acetyl-alpha-D-glucosamine</name>
        <dbReference type="ChEBI" id="CHEBI:57705"/>
    </ligand>
</feature>
<feature type="binding site" evidence="1">
    <location>
        <begin position="121"/>
        <end position="125"/>
    </location>
    <ligand>
        <name>UDP-N-acetyl-alpha-D-glucosamine</name>
        <dbReference type="ChEBI" id="CHEBI:57705"/>
    </ligand>
</feature>
<feature type="binding site" evidence="1">
    <location>
        <position position="308"/>
    </location>
    <ligand>
        <name>UDP-N-acetyl-alpha-D-glucosamine</name>
        <dbReference type="ChEBI" id="CHEBI:57705"/>
    </ligand>
</feature>
<feature type="binding site" evidence="1">
    <location>
        <position position="330"/>
    </location>
    <ligand>
        <name>UDP-N-acetyl-alpha-D-glucosamine</name>
        <dbReference type="ChEBI" id="CHEBI:57705"/>
    </ligand>
</feature>
<feature type="modified residue" description="2-(S-cysteinyl)pyruvic acid O-phosphothioketal" evidence="1">
    <location>
        <position position="116"/>
    </location>
</feature>
<accession>Q8XV78</accession>
<organism>
    <name type="scientific">Ralstonia nicotianae (strain ATCC BAA-1114 / GMI1000)</name>
    <name type="common">Ralstonia solanacearum</name>
    <dbReference type="NCBI Taxonomy" id="267608"/>
    <lineage>
        <taxon>Bacteria</taxon>
        <taxon>Pseudomonadati</taxon>
        <taxon>Pseudomonadota</taxon>
        <taxon>Betaproteobacteria</taxon>
        <taxon>Burkholderiales</taxon>
        <taxon>Burkholderiaceae</taxon>
        <taxon>Ralstonia</taxon>
        <taxon>Ralstonia solanacearum species complex</taxon>
    </lineage>
</organism>
<proteinExistence type="inferred from homology"/>
<sequence>MDKLLIEGNGPLSGEIRVSGAKNAALPIMCAALLTPEPFTLHNVPNLQDVRTMLKLLRQMGVEGTQDGHDVTLDAAAIDAPEAPYDLVKTMRASILVLGPLLARFGHARVSLPGGCGIGARPVDQHIKGLQQMGAEIVIEHGYIEAKLADGAKRLHGARIVTDMVTVTGTENLLMAAVLADGETVLENAAREPEVTDLANLLVKMGARIDGIGTDRLVVQGVEALRGAEHTVIADRIEAGTFLCAVAAAGGDVTLRGVPPGILDAVLDKLREAGVTLTMGDDWIRVQMHGRPKAVSFRTSEYPAFPTDMQAQFMMLNCIAEGAALVTETIFENRFMHVQELNRLGANIITEGNTAAVTGVEQLSGATVMATDLRASASLVIAGLVAQGETLVDRIYHLDRGYDCIEDKLSAVGAKIRRIQG</sequence>
<protein>
    <recommendedName>
        <fullName evidence="1">UDP-N-acetylglucosamine 1-carboxyvinyltransferase</fullName>
        <ecNumber evidence="1">2.5.1.7</ecNumber>
    </recommendedName>
    <alternativeName>
        <fullName evidence="1">Enoylpyruvate transferase</fullName>
    </alternativeName>
    <alternativeName>
        <fullName evidence="1">UDP-N-acetylglucosamine enolpyruvyl transferase</fullName>
        <shortName evidence="1">EPT</shortName>
    </alternativeName>
</protein>
<keyword id="KW-0131">Cell cycle</keyword>
<keyword id="KW-0132">Cell division</keyword>
<keyword id="KW-0133">Cell shape</keyword>
<keyword id="KW-0961">Cell wall biogenesis/degradation</keyword>
<keyword id="KW-0963">Cytoplasm</keyword>
<keyword id="KW-0573">Peptidoglycan synthesis</keyword>
<keyword id="KW-0670">Pyruvate</keyword>
<keyword id="KW-1185">Reference proteome</keyword>
<keyword id="KW-0808">Transferase</keyword>
<reference key="1">
    <citation type="journal article" date="2002" name="Nature">
        <title>Genome sequence of the plant pathogen Ralstonia solanacearum.</title>
        <authorList>
            <person name="Salanoubat M."/>
            <person name="Genin S."/>
            <person name="Artiguenave F."/>
            <person name="Gouzy J."/>
            <person name="Mangenot S."/>
            <person name="Arlat M."/>
            <person name="Billault A."/>
            <person name="Brottier P."/>
            <person name="Camus J.-C."/>
            <person name="Cattolico L."/>
            <person name="Chandler M."/>
            <person name="Choisne N."/>
            <person name="Claudel-Renard C."/>
            <person name="Cunnac S."/>
            <person name="Demange N."/>
            <person name="Gaspin C."/>
            <person name="Lavie M."/>
            <person name="Moisan A."/>
            <person name="Robert C."/>
            <person name="Saurin W."/>
            <person name="Schiex T."/>
            <person name="Siguier P."/>
            <person name="Thebault P."/>
            <person name="Whalen M."/>
            <person name="Wincker P."/>
            <person name="Levy M."/>
            <person name="Weissenbach J."/>
            <person name="Boucher C.A."/>
        </authorList>
    </citation>
    <scope>NUCLEOTIDE SEQUENCE [LARGE SCALE GENOMIC DNA]</scope>
    <source>
        <strain>ATCC BAA-1114 / GMI1000</strain>
    </source>
</reference>
<comment type="function">
    <text evidence="1">Cell wall formation. Adds enolpyruvyl to UDP-N-acetylglucosamine.</text>
</comment>
<comment type="catalytic activity">
    <reaction evidence="1">
        <text>phosphoenolpyruvate + UDP-N-acetyl-alpha-D-glucosamine = UDP-N-acetyl-3-O-(1-carboxyvinyl)-alpha-D-glucosamine + phosphate</text>
        <dbReference type="Rhea" id="RHEA:18681"/>
        <dbReference type="ChEBI" id="CHEBI:43474"/>
        <dbReference type="ChEBI" id="CHEBI:57705"/>
        <dbReference type="ChEBI" id="CHEBI:58702"/>
        <dbReference type="ChEBI" id="CHEBI:68483"/>
        <dbReference type="EC" id="2.5.1.7"/>
    </reaction>
</comment>
<comment type="pathway">
    <text evidence="1">Cell wall biogenesis; peptidoglycan biosynthesis.</text>
</comment>
<comment type="subcellular location">
    <subcellularLocation>
        <location evidence="1">Cytoplasm</location>
    </subcellularLocation>
</comment>
<comment type="similarity">
    <text evidence="1">Belongs to the EPSP synthase family. MurA subfamily.</text>
</comment>